<evidence type="ECO:0000255" key="1"/>
<evidence type="ECO:0000269" key="2">
    <source>
    </source>
</evidence>
<evidence type="ECO:0000303" key="3">
    <source>
    </source>
</evidence>
<evidence type="ECO:0000305" key="4"/>
<evidence type="ECO:0000305" key="5">
    <source>
    </source>
</evidence>
<feature type="signal peptide" evidence="1">
    <location>
        <begin position="1"/>
        <end position="22"/>
    </location>
</feature>
<feature type="propeptide" id="PRO_0000451081" evidence="5">
    <location>
        <begin position="23"/>
        <end position="33"/>
    </location>
</feature>
<feature type="chain" id="PRO_5014447851" description="O-conotoxin GeXXXIA" evidence="2">
    <location>
        <begin position="34"/>
        <end position="74"/>
    </location>
</feature>
<feature type="sequence conflict" description="In Ref. 1; AA sequence." ref="1">
    <original>L</original>
    <variation>P</variation>
    <location>
        <position position="45"/>
    </location>
</feature>
<proteinExistence type="evidence at protein level"/>
<organism>
    <name type="scientific">Conus generalis</name>
    <name type="common">General cone</name>
    <dbReference type="NCBI Taxonomy" id="101304"/>
    <lineage>
        <taxon>Eukaryota</taxon>
        <taxon>Metazoa</taxon>
        <taxon>Spiralia</taxon>
        <taxon>Lophotrochozoa</taxon>
        <taxon>Mollusca</taxon>
        <taxon>Gastropoda</taxon>
        <taxon>Caenogastropoda</taxon>
        <taxon>Neogastropoda</taxon>
        <taxon>Conoidea</taxon>
        <taxon>Conidae</taxon>
        <taxon>Conus</taxon>
        <taxon>Strategoconus</taxon>
    </lineage>
</organism>
<dbReference type="EMBL" id="KY523472">
    <property type="protein sequence ID" value="ARN17767.1"/>
    <property type="molecule type" value="mRNA"/>
</dbReference>
<dbReference type="SMR" id="A0A2I4QAG8"/>
<dbReference type="GO" id="GO:0005576">
    <property type="term" value="C:extracellular region"/>
    <property type="evidence" value="ECO:0007669"/>
    <property type="project" value="UniProtKB-SubCell"/>
</dbReference>
<dbReference type="GO" id="GO:0035792">
    <property type="term" value="C:host cell postsynaptic membrane"/>
    <property type="evidence" value="ECO:0007669"/>
    <property type="project" value="UniProtKB-KW"/>
</dbReference>
<dbReference type="GO" id="GO:0030550">
    <property type="term" value="F:acetylcholine receptor inhibitor activity"/>
    <property type="evidence" value="ECO:0007669"/>
    <property type="project" value="UniProtKB-KW"/>
</dbReference>
<dbReference type="GO" id="GO:0008200">
    <property type="term" value="F:ion channel inhibitor activity"/>
    <property type="evidence" value="ECO:0007669"/>
    <property type="project" value="InterPro"/>
</dbReference>
<dbReference type="GO" id="GO:0090729">
    <property type="term" value="F:toxin activity"/>
    <property type="evidence" value="ECO:0007669"/>
    <property type="project" value="UniProtKB-KW"/>
</dbReference>
<dbReference type="InterPro" id="IPR004214">
    <property type="entry name" value="Conotoxin"/>
</dbReference>
<dbReference type="Pfam" id="PF02950">
    <property type="entry name" value="Conotoxin"/>
    <property type="match status" value="1"/>
</dbReference>
<keyword id="KW-0008">Acetylcholine receptor inhibiting toxin</keyword>
<keyword id="KW-0903">Direct protein sequencing</keyword>
<keyword id="KW-1015">Disulfide bond</keyword>
<keyword id="KW-0528">Neurotoxin</keyword>
<keyword id="KW-0629">Postsynaptic neurotoxin</keyword>
<keyword id="KW-0964">Secreted</keyword>
<keyword id="KW-0732">Signal</keyword>
<keyword id="KW-0800">Toxin</keyword>
<comment type="function">
    <text evidence="2">The activity of this natural homodimer has not been tested due to low abundance (PubMed:28598389). The synthetic linear peptide has been refolded, giving 4 different monomeric isomers (m1 to m4) with 2 disulfide bonds each (PubMed:28598389). All isomers potently inhibit rat alpha-1-beta-1-delta-epsilon/CHRNA1-CHRNB1-CHRND-CHRNE and human alpha-9-alpha-10/CHRNA9-CHRNA10 nicotinic acetylcholine receptors (nAChR) (PubMed:28598389). In addition, they show a modest inhibition at human alpha-3-beta-2/CHRNA3-CHRNB2, alpha-3-beta-4/CHRNA3-CHRNB4, alpha-7/CHRNA7, and alpha-4-beta-4/CHRNA4-CHRNB4 (PubMed:28598389). The synthetic monomer peptide without disulfide bonds shows a potent activity on alpha-9-alpha-10/CHRNA9 and CHRNA10 (IC(50)=16.2 nM) (PubMed:28598389). This linear peptide does not act as a competitive antagonist, or as a channel pore blocker of nAChR (PubMed:28598389).</text>
</comment>
<comment type="subunit">
    <text evidence="2">Homodimer; disulfide-linked.</text>
</comment>
<comment type="subcellular location">
    <subcellularLocation>
        <location evidence="2">Secreted</location>
    </subcellularLocation>
</comment>
<comment type="tissue specificity">
    <text evidence="5">Expressed by the venom duct.</text>
</comment>
<comment type="domain">
    <text evidence="4">The cysteine framework is C-C-C-C-C.</text>
</comment>
<comment type="PTM">
    <text evidence="2">May contain 2 intrachain disulfide bonds and probably one interchain disulfide bond forming the homodimer.</text>
</comment>
<comment type="PTM">
    <text evidence="2">The disulfide pairing is not important for activity towards the different nAChR subtypes, since this peptide without disulfide bond or with different disulfide bonds shows the same activity.</text>
</comment>
<comment type="similarity">
    <text evidence="4">Belongs to the conotoxin O1 superfamily.</text>
</comment>
<comment type="caution">
    <text evidence="4 5">Authors numbered this protein framework XXVII. Since this number is already attributed to another Cys arrangment (C-C-C-CCC-C-C), it is not indicated here to define the cysteine framework of this toxin.</text>
</comment>
<sequence>MKLTCVLIITVLFLTACQLTTAVTYSRGEHKHRALMSTGTNYRLLKTCRGSGRYCRSPYDCRRRYCRRISDACV</sequence>
<accession>A0A2I4QAG8</accession>
<name>O1VA_CONGR</name>
<reference key="1">
    <citation type="journal article" date="2017" name="Mar. Drugs">
        <title>Identification of a novel O-conotoxin reveals an unusual and potent inhibitor of the human alpha9alpha10 nicotinic acetylcholine receptor.</title>
        <authorList>
            <person name="Jiang S."/>
            <person name="Tae H.S."/>
            <person name="Xu S."/>
            <person name="Shao X."/>
            <person name="Adams D.J."/>
            <person name="Wang C."/>
        </authorList>
    </citation>
    <scope>NUCLEOTIDE SEQUENCE [MRNA]</scope>
    <scope>PROTEIN SEQUENCE OF 34-52</scope>
    <scope>FUNCTION</scope>
    <scope>SUBCELLULAR LOCATION</scope>
    <scope>SUBUNIT</scope>
    <scope>IDENTIFICATION BY MASS SPECTROMETRY</scope>
</reference>
<protein>
    <recommendedName>
        <fullName evidence="4">O-conotoxin GeXXXIA</fullName>
    </recommendedName>
    <alternativeName>
        <fullName evidence="3">O-conotoxin GeXXVIIA</fullName>
        <shortName evidence="3">O-GeXXVIIA</shortName>
    </alternativeName>
</protein>